<feature type="chain" id="PRO_0000415643" description="Thiamine-monophosphate kinase">
    <location>
        <begin position="1"/>
        <end position="333"/>
    </location>
</feature>
<feature type="binding site" evidence="1">
    <location>
        <position position="35"/>
    </location>
    <ligand>
        <name>Mg(2+)</name>
        <dbReference type="ChEBI" id="CHEBI:18420"/>
        <label>3</label>
    </ligand>
</feature>
<feature type="binding site" evidence="1">
    <location>
        <position position="35"/>
    </location>
    <ligand>
        <name>Mg(2+)</name>
        <dbReference type="ChEBI" id="CHEBI:18420"/>
        <label>4</label>
    </ligand>
</feature>
<feature type="binding site" evidence="1">
    <location>
        <position position="50"/>
    </location>
    <ligand>
        <name>Mg(2+)</name>
        <dbReference type="ChEBI" id="CHEBI:18420"/>
        <label>1</label>
    </ligand>
</feature>
<feature type="binding site" evidence="1">
    <location>
        <position position="51"/>
    </location>
    <ligand>
        <name>Mg(2+)</name>
        <dbReference type="ChEBI" id="CHEBI:18420"/>
        <label>1</label>
    </ligand>
</feature>
<feature type="binding site" evidence="1">
    <location>
        <position position="51"/>
    </location>
    <ligand>
        <name>Mg(2+)</name>
        <dbReference type="ChEBI" id="CHEBI:18420"/>
        <label>2</label>
    </ligand>
</feature>
<feature type="binding site" evidence="1">
    <location>
        <position position="58"/>
    </location>
    <ligand>
        <name>substrate</name>
    </ligand>
</feature>
<feature type="binding site" evidence="1">
    <location>
        <position position="80"/>
    </location>
    <ligand>
        <name>Mg(2+)</name>
        <dbReference type="ChEBI" id="CHEBI:18420"/>
        <label>2</label>
    </ligand>
</feature>
<feature type="binding site" evidence="1">
    <location>
        <position position="80"/>
    </location>
    <ligand>
        <name>Mg(2+)</name>
        <dbReference type="ChEBI" id="CHEBI:18420"/>
        <label>3</label>
    </ligand>
</feature>
<feature type="binding site" evidence="1">
    <location>
        <position position="80"/>
    </location>
    <ligand>
        <name>Mg(2+)</name>
        <dbReference type="ChEBI" id="CHEBI:18420"/>
        <label>4</label>
    </ligand>
</feature>
<feature type="binding site" evidence="1">
    <location>
        <position position="111"/>
    </location>
    <ligand>
        <name>ATP</name>
        <dbReference type="ChEBI" id="CHEBI:30616"/>
    </ligand>
</feature>
<feature type="binding site" evidence="1">
    <location>
        <begin position="128"/>
        <end position="129"/>
    </location>
    <ligand>
        <name>ATP</name>
        <dbReference type="ChEBI" id="CHEBI:30616"/>
    </ligand>
</feature>
<feature type="binding site" evidence="1">
    <location>
        <position position="129"/>
    </location>
    <ligand>
        <name>Mg(2+)</name>
        <dbReference type="ChEBI" id="CHEBI:18420"/>
        <label>1</label>
    </ligand>
</feature>
<feature type="binding site" evidence="1">
    <location>
        <position position="153"/>
    </location>
    <ligand>
        <name>ATP</name>
        <dbReference type="ChEBI" id="CHEBI:30616"/>
    </ligand>
</feature>
<feature type="binding site" evidence="1">
    <location>
        <position position="230"/>
    </location>
    <ligand>
        <name>Mg(2+)</name>
        <dbReference type="ChEBI" id="CHEBI:18420"/>
        <label>3</label>
    </ligand>
</feature>
<feature type="binding site" evidence="1">
    <location>
        <position position="232"/>
    </location>
    <ligand>
        <name>ATP</name>
        <dbReference type="ChEBI" id="CHEBI:30616"/>
    </ligand>
</feature>
<feature type="binding site" evidence="1">
    <location>
        <position position="233"/>
    </location>
    <ligand>
        <name>Mg(2+)</name>
        <dbReference type="ChEBI" id="CHEBI:18420"/>
        <label>5</label>
    </ligand>
</feature>
<feature type="binding site" evidence="1">
    <location>
        <position position="278"/>
    </location>
    <ligand>
        <name>substrate</name>
    </ligand>
</feature>
<feature type="binding site" evidence="1">
    <location>
        <position position="330"/>
    </location>
    <ligand>
        <name>substrate</name>
    </ligand>
</feature>
<proteinExistence type="inferred from homology"/>
<keyword id="KW-0067">ATP-binding</keyword>
<keyword id="KW-0418">Kinase</keyword>
<keyword id="KW-0460">Magnesium</keyword>
<keyword id="KW-0479">Metal-binding</keyword>
<keyword id="KW-0547">Nucleotide-binding</keyword>
<keyword id="KW-1185">Reference proteome</keyword>
<keyword id="KW-0784">Thiamine biosynthesis</keyword>
<keyword id="KW-0808">Transferase</keyword>
<protein>
    <recommendedName>
        <fullName evidence="1">Thiamine-monophosphate kinase</fullName>
        <shortName evidence="1">TMP kinase</shortName>
        <shortName evidence="1">Thiamine-phosphate kinase</shortName>
        <ecNumber evidence="1">2.7.4.16</ecNumber>
    </recommendedName>
</protein>
<reference key="1">
    <citation type="journal article" date="2003" name="Proc. Natl. Acad. Sci. U.S.A.">
        <title>Genome sequence of the cyanobacterium Prochlorococcus marinus SS120, a nearly minimal oxyphototrophic genome.</title>
        <authorList>
            <person name="Dufresne A."/>
            <person name="Salanoubat M."/>
            <person name="Partensky F."/>
            <person name="Artiguenave F."/>
            <person name="Axmann I.M."/>
            <person name="Barbe V."/>
            <person name="Duprat S."/>
            <person name="Galperin M.Y."/>
            <person name="Koonin E.V."/>
            <person name="Le Gall F."/>
            <person name="Makarova K.S."/>
            <person name="Ostrowski M."/>
            <person name="Oztas S."/>
            <person name="Robert C."/>
            <person name="Rogozin I.B."/>
            <person name="Scanlan D.J."/>
            <person name="Tandeau de Marsac N."/>
            <person name="Weissenbach J."/>
            <person name="Wincker P."/>
            <person name="Wolf Y.I."/>
            <person name="Hess W.R."/>
        </authorList>
    </citation>
    <scope>NUCLEOTIDE SEQUENCE [LARGE SCALE GENOMIC DNA]</scope>
    <source>
        <strain>SARG / CCMP1375 / SS120</strain>
    </source>
</reference>
<gene>
    <name evidence="1" type="primary">thiL</name>
    <name type="ordered locus">Pro_0024</name>
</gene>
<evidence type="ECO:0000255" key="1">
    <source>
        <dbReference type="HAMAP-Rule" id="MF_02128"/>
    </source>
</evidence>
<comment type="function">
    <text evidence="1">Catalyzes the ATP-dependent phosphorylation of thiamine-monophosphate (TMP) to form thiamine-pyrophosphate (TPP), the active form of vitamin B1.</text>
</comment>
<comment type="catalytic activity">
    <reaction evidence="1">
        <text>thiamine phosphate + ATP = thiamine diphosphate + ADP</text>
        <dbReference type="Rhea" id="RHEA:15913"/>
        <dbReference type="ChEBI" id="CHEBI:30616"/>
        <dbReference type="ChEBI" id="CHEBI:37575"/>
        <dbReference type="ChEBI" id="CHEBI:58937"/>
        <dbReference type="ChEBI" id="CHEBI:456216"/>
        <dbReference type="EC" id="2.7.4.16"/>
    </reaction>
</comment>
<comment type="pathway">
    <text evidence="1">Cofactor biosynthesis; thiamine diphosphate biosynthesis; thiamine diphosphate from thiamine phosphate: step 1/1.</text>
</comment>
<comment type="miscellaneous">
    <text evidence="1">Reaction mechanism of ThiL seems to utilize a direct, inline transfer of the gamma-phosphate of ATP to TMP rather than a phosphorylated enzyme intermediate.</text>
</comment>
<comment type="similarity">
    <text evidence="1">Belongs to the thiamine-monophosphate kinase family.</text>
</comment>
<organism>
    <name type="scientific">Prochlorococcus marinus (strain SARG / CCMP1375 / SS120)</name>
    <dbReference type="NCBI Taxonomy" id="167539"/>
    <lineage>
        <taxon>Bacteria</taxon>
        <taxon>Bacillati</taxon>
        <taxon>Cyanobacteriota</taxon>
        <taxon>Cyanophyceae</taxon>
        <taxon>Synechococcales</taxon>
        <taxon>Prochlorococcaceae</taxon>
        <taxon>Prochlorococcus</taxon>
    </lineage>
</organism>
<accession>Q7VEI9</accession>
<sequence>MLKEENTQEILHDLGEQEILNRLRKYMDYGQIDDDTALIKSYKKELIINTDMLVEDVHFSEITTNPNHIGWKAVATNLSDLACSGLEEVIGITVGLSAPSSTPWSWVDGVYTGIKAALNKFGGKLLGGDCSNGKQKTLCITALGTKGPLNLHRSNARPGDYLITSGPHGLSRLGLSLLLSDPITKSINVPNLLKEHAIKAHQEPQPPIKALQTLLKCKPYAMPWNAAATDSSDGLLEAIESLCRSSNCTAVVDHKNLPKHADWPSGKQWNDWCLEGGEDFELVVSLPPNWAKAWLKAMPCTKAIGRMKEGPAKAMWSNGETIQKAMDTKFEHF</sequence>
<name>THIL_PROMA</name>
<dbReference type="EC" id="2.7.4.16" evidence="1"/>
<dbReference type="EMBL" id="AE017126">
    <property type="protein sequence ID" value="AAP99070.1"/>
    <property type="molecule type" value="Genomic_DNA"/>
</dbReference>
<dbReference type="RefSeq" id="NP_874418.1">
    <property type="nucleotide sequence ID" value="NC_005042.1"/>
</dbReference>
<dbReference type="RefSeq" id="WP_011124179.1">
    <property type="nucleotide sequence ID" value="NC_005042.1"/>
</dbReference>
<dbReference type="SMR" id="Q7VEI9"/>
<dbReference type="STRING" id="167539.Pro_0024"/>
<dbReference type="EnsemblBacteria" id="AAP99070">
    <property type="protein sequence ID" value="AAP99070"/>
    <property type="gene ID" value="Pro_0024"/>
</dbReference>
<dbReference type="KEGG" id="pma:Pro_0024"/>
<dbReference type="PATRIC" id="fig|167539.5.peg.24"/>
<dbReference type="eggNOG" id="COG0611">
    <property type="taxonomic scope" value="Bacteria"/>
</dbReference>
<dbReference type="HOGENOM" id="CLU_046964_3_0_3"/>
<dbReference type="OrthoDB" id="9802811at2"/>
<dbReference type="UniPathway" id="UPA00060">
    <property type="reaction ID" value="UER00142"/>
</dbReference>
<dbReference type="Proteomes" id="UP000001420">
    <property type="component" value="Chromosome"/>
</dbReference>
<dbReference type="GO" id="GO:0005524">
    <property type="term" value="F:ATP binding"/>
    <property type="evidence" value="ECO:0007669"/>
    <property type="project" value="UniProtKB-UniRule"/>
</dbReference>
<dbReference type="GO" id="GO:0000287">
    <property type="term" value="F:magnesium ion binding"/>
    <property type="evidence" value="ECO:0007669"/>
    <property type="project" value="UniProtKB-UniRule"/>
</dbReference>
<dbReference type="GO" id="GO:0009030">
    <property type="term" value="F:thiamine-phosphate kinase activity"/>
    <property type="evidence" value="ECO:0007669"/>
    <property type="project" value="UniProtKB-UniRule"/>
</dbReference>
<dbReference type="GO" id="GO:0009228">
    <property type="term" value="P:thiamine biosynthetic process"/>
    <property type="evidence" value="ECO:0007669"/>
    <property type="project" value="UniProtKB-KW"/>
</dbReference>
<dbReference type="GO" id="GO:0009229">
    <property type="term" value="P:thiamine diphosphate biosynthetic process"/>
    <property type="evidence" value="ECO:0007669"/>
    <property type="project" value="UniProtKB-UniRule"/>
</dbReference>
<dbReference type="CDD" id="cd02194">
    <property type="entry name" value="ThiL"/>
    <property type="match status" value="1"/>
</dbReference>
<dbReference type="Gene3D" id="3.90.650.10">
    <property type="entry name" value="PurM-like C-terminal domain"/>
    <property type="match status" value="1"/>
</dbReference>
<dbReference type="Gene3D" id="3.30.1330.10">
    <property type="entry name" value="PurM-like, N-terminal domain"/>
    <property type="match status" value="1"/>
</dbReference>
<dbReference type="HAMAP" id="MF_02128">
    <property type="entry name" value="TMP_kinase"/>
    <property type="match status" value="1"/>
</dbReference>
<dbReference type="InterPro" id="IPR010918">
    <property type="entry name" value="PurM-like_C_dom"/>
</dbReference>
<dbReference type="InterPro" id="IPR036676">
    <property type="entry name" value="PurM-like_C_sf"/>
</dbReference>
<dbReference type="InterPro" id="IPR016188">
    <property type="entry name" value="PurM-like_N"/>
</dbReference>
<dbReference type="InterPro" id="IPR036921">
    <property type="entry name" value="PurM-like_N_sf"/>
</dbReference>
<dbReference type="InterPro" id="IPR006283">
    <property type="entry name" value="ThiL-like"/>
</dbReference>
<dbReference type="NCBIfam" id="TIGR01379">
    <property type="entry name" value="thiL"/>
    <property type="match status" value="1"/>
</dbReference>
<dbReference type="PANTHER" id="PTHR30270">
    <property type="entry name" value="THIAMINE-MONOPHOSPHATE KINASE"/>
    <property type="match status" value="1"/>
</dbReference>
<dbReference type="PANTHER" id="PTHR30270:SF0">
    <property type="entry name" value="THIAMINE-MONOPHOSPHATE KINASE"/>
    <property type="match status" value="1"/>
</dbReference>
<dbReference type="Pfam" id="PF00586">
    <property type="entry name" value="AIRS"/>
    <property type="match status" value="1"/>
</dbReference>
<dbReference type="Pfam" id="PF02769">
    <property type="entry name" value="AIRS_C"/>
    <property type="match status" value="1"/>
</dbReference>
<dbReference type="PIRSF" id="PIRSF005303">
    <property type="entry name" value="Thiam_monoph_kin"/>
    <property type="match status" value="1"/>
</dbReference>
<dbReference type="SUPFAM" id="SSF56042">
    <property type="entry name" value="PurM C-terminal domain-like"/>
    <property type="match status" value="1"/>
</dbReference>
<dbReference type="SUPFAM" id="SSF55326">
    <property type="entry name" value="PurM N-terminal domain-like"/>
    <property type="match status" value="1"/>
</dbReference>